<organism>
    <name type="scientific">Pectobacterium atrosepticum (strain SCRI 1043 / ATCC BAA-672)</name>
    <name type="common">Erwinia carotovora subsp. atroseptica</name>
    <dbReference type="NCBI Taxonomy" id="218491"/>
    <lineage>
        <taxon>Bacteria</taxon>
        <taxon>Pseudomonadati</taxon>
        <taxon>Pseudomonadota</taxon>
        <taxon>Gammaproteobacteria</taxon>
        <taxon>Enterobacterales</taxon>
        <taxon>Pectobacteriaceae</taxon>
        <taxon>Pectobacterium</taxon>
    </lineage>
</organism>
<evidence type="ECO:0000250" key="1"/>
<evidence type="ECO:0000269" key="2">
    <source>
    </source>
</evidence>
<evidence type="ECO:0000305" key="3"/>
<comment type="function">
    <text evidence="2">Has no detectable activity with D-mannonate and with a panel of 70 other acid sugars (in vitro), in spite of the conservation of the residues that are expected to be important for catalytic activity and cofactor binding. May have evolved a divergent function.</text>
</comment>
<comment type="similarity">
    <text evidence="3">Belongs to the mandelate racemase/muconate lactonizing enzyme family. GalD subfamily.</text>
</comment>
<sequence length="399" mass="45209">MLPTIITDIECLVTRPDRHNLVTVVVHTNKNVTGYGCATFQQRPLAVKAMVDEYLKPLLLGRDANHIEDLWHMMMVNAYWRNGPVINNAVAGVDMALWDIKGKLADMPLYHLFGGKSRDAIAAYSHAASDTLDGLYQEVERLYAQGYRHIRCQLGFYGGNPDALHSTRQPTEGAYYDQDQYMANTLAMFRALREKYGDRFHILHDVHERLFPNQAVQFAKAVEVYRPYFIEDILPPAQNEWLAQIRSQSAVPLATGELFNNPAEWQNLVINRQVDFIRCHVSQIGGITPALKLGAFCQNFGVRLAWHCPPDMTPIGAAVNIHLNIHLHNAAIQEFVAYPENTRKVFPQAVEPENGYLYPIERPGIGVGIDLDAARQFPVVYRPHEWTQSRLPDGTMHTP</sequence>
<proteinExistence type="inferred from homology"/>
<accession>Q6DAR4</accession>
<name>IMAND_PECAS</name>
<feature type="chain" id="PRO_0000429911" description="D-galactonate dehydratase family member ECA0189">
    <location>
        <begin position="1"/>
        <end position="399"/>
    </location>
</feature>
<feature type="binding site" evidence="1">
    <location>
        <position position="205"/>
    </location>
    <ligand>
        <name>Mg(2+)</name>
        <dbReference type="ChEBI" id="CHEBI:18420"/>
    </ligand>
</feature>
<feature type="binding site" evidence="1">
    <location>
        <position position="207"/>
    </location>
    <ligand>
        <name>D-arabinonate</name>
        <dbReference type="ChEBI" id="CHEBI:16157"/>
    </ligand>
</feature>
<feature type="binding site" evidence="1">
    <location>
        <position position="231"/>
    </location>
    <ligand>
        <name>Mg(2+)</name>
        <dbReference type="ChEBI" id="CHEBI:18420"/>
    </ligand>
</feature>
<feature type="binding site" evidence="1">
    <location>
        <position position="257"/>
    </location>
    <ligand>
        <name>D-arabinonate</name>
        <dbReference type="ChEBI" id="CHEBI:16157"/>
    </ligand>
</feature>
<feature type="binding site" evidence="1">
    <location>
        <position position="257"/>
    </location>
    <ligand>
        <name>Mg(2+)</name>
        <dbReference type="ChEBI" id="CHEBI:18420"/>
    </ligand>
</feature>
<feature type="binding site" evidence="1">
    <location>
        <position position="278"/>
    </location>
    <ligand>
        <name>D-arabinonate</name>
        <dbReference type="ChEBI" id="CHEBI:16157"/>
    </ligand>
</feature>
<feature type="binding site" evidence="1">
    <location>
        <position position="307"/>
    </location>
    <ligand>
        <name>D-arabinonate</name>
        <dbReference type="ChEBI" id="CHEBI:16157"/>
    </ligand>
</feature>
<feature type="binding site" evidence="1">
    <location>
        <position position="334"/>
    </location>
    <ligand>
        <name>D-arabinonate</name>
        <dbReference type="ChEBI" id="CHEBI:16157"/>
    </ligand>
</feature>
<dbReference type="EMBL" id="BX950851">
    <property type="protein sequence ID" value="CAG73108.1"/>
    <property type="molecule type" value="Genomic_DNA"/>
</dbReference>
<dbReference type="RefSeq" id="WP_011091828.1">
    <property type="nucleotide sequence ID" value="NC_004547.2"/>
</dbReference>
<dbReference type="SMR" id="Q6DAR4"/>
<dbReference type="STRING" id="218491.ECA0189"/>
<dbReference type="KEGG" id="eca:ECA0189"/>
<dbReference type="PATRIC" id="fig|218491.5.peg.188"/>
<dbReference type="eggNOG" id="COG4948">
    <property type="taxonomic scope" value="Bacteria"/>
</dbReference>
<dbReference type="HOGENOM" id="CLU_030273_6_1_6"/>
<dbReference type="OrthoDB" id="103536at2"/>
<dbReference type="Proteomes" id="UP000007966">
    <property type="component" value="Chromosome"/>
</dbReference>
<dbReference type="GO" id="GO:0000287">
    <property type="term" value="F:magnesium ion binding"/>
    <property type="evidence" value="ECO:0000250"/>
    <property type="project" value="UniProtKB"/>
</dbReference>
<dbReference type="GO" id="GO:0009063">
    <property type="term" value="P:amino acid catabolic process"/>
    <property type="evidence" value="ECO:0007669"/>
    <property type="project" value="InterPro"/>
</dbReference>
<dbReference type="CDD" id="cd03322">
    <property type="entry name" value="RspA"/>
    <property type="match status" value="1"/>
</dbReference>
<dbReference type="FunFam" id="3.20.20.120:FF:000011">
    <property type="entry name" value="D-galactonate dehydratase family member VSWAT3_13707"/>
    <property type="match status" value="1"/>
</dbReference>
<dbReference type="Gene3D" id="3.20.20.120">
    <property type="entry name" value="Enolase-like C-terminal domain"/>
    <property type="match status" value="1"/>
</dbReference>
<dbReference type="Gene3D" id="3.30.390.10">
    <property type="entry name" value="Enolase-like, N-terminal domain"/>
    <property type="match status" value="1"/>
</dbReference>
<dbReference type="InterPro" id="IPR034589">
    <property type="entry name" value="D-mannonate_dehydratase-like"/>
</dbReference>
<dbReference type="InterPro" id="IPR034593">
    <property type="entry name" value="DgoD-like"/>
</dbReference>
<dbReference type="InterPro" id="IPR036849">
    <property type="entry name" value="Enolase-like_C_sf"/>
</dbReference>
<dbReference type="InterPro" id="IPR029017">
    <property type="entry name" value="Enolase-like_N"/>
</dbReference>
<dbReference type="InterPro" id="IPR029065">
    <property type="entry name" value="Enolase_C-like"/>
</dbReference>
<dbReference type="InterPro" id="IPR018110">
    <property type="entry name" value="Mandel_Rmase/mucon_lact_enz_CS"/>
</dbReference>
<dbReference type="InterPro" id="IPR013342">
    <property type="entry name" value="Mandelate_racemase_C"/>
</dbReference>
<dbReference type="InterPro" id="IPR013341">
    <property type="entry name" value="Mandelate_racemase_N_dom"/>
</dbReference>
<dbReference type="PANTHER" id="PTHR48080">
    <property type="entry name" value="D-GALACTONATE DEHYDRATASE-RELATED"/>
    <property type="match status" value="1"/>
</dbReference>
<dbReference type="PANTHER" id="PTHR48080:SF6">
    <property type="entry name" value="STARVATION-SENSING PROTEIN RSPA"/>
    <property type="match status" value="1"/>
</dbReference>
<dbReference type="Pfam" id="PF13378">
    <property type="entry name" value="MR_MLE_C"/>
    <property type="match status" value="1"/>
</dbReference>
<dbReference type="Pfam" id="PF02746">
    <property type="entry name" value="MR_MLE_N"/>
    <property type="match status" value="1"/>
</dbReference>
<dbReference type="SFLD" id="SFLDS00001">
    <property type="entry name" value="Enolase"/>
    <property type="match status" value="1"/>
</dbReference>
<dbReference type="SFLD" id="SFLDG00033">
    <property type="entry name" value="mannonate_dehydratase"/>
    <property type="match status" value="1"/>
</dbReference>
<dbReference type="SMART" id="SM00922">
    <property type="entry name" value="MR_MLE"/>
    <property type="match status" value="1"/>
</dbReference>
<dbReference type="SUPFAM" id="SSF51604">
    <property type="entry name" value="Enolase C-terminal domain-like"/>
    <property type="match status" value="1"/>
</dbReference>
<dbReference type="SUPFAM" id="SSF54826">
    <property type="entry name" value="Enolase N-terminal domain-like"/>
    <property type="match status" value="1"/>
</dbReference>
<dbReference type="PROSITE" id="PS00908">
    <property type="entry name" value="MR_MLE_1"/>
    <property type="match status" value="1"/>
</dbReference>
<keyword id="KW-0460">Magnesium</keyword>
<keyword id="KW-0479">Metal-binding</keyword>
<keyword id="KW-1185">Reference proteome</keyword>
<reference key="1">
    <citation type="journal article" date="2004" name="Proc. Natl. Acad. Sci. U.S.A.">
        <title>Genome sequence of the enterobacterial phytopathogen Erwinia carotovora subsp. atroseptica and characterization of virulence factors.</title>
        <authorList>
            <person name="Bell K.S."/>
            <person name="Sebaihia M."/>
            <person name="Pritchard L."/>
            <person name="Holden M.T.G."/>
            <person name="Hyman L.J."/>
            <person name="Holeva M.C."/>
            <person name="Thomson N.R."/>
            <person name="Bentley S.D."/>
            <person name="Churcher L.J.C."/>
            <person name="Mungall K."/>
            <person name="Atkin R."/>
            <person name="Bason N."/>
            <person name="Brooks K."/>
            <person name="Chillingworth T."/>
            <person name="Clark K."/>
            <person name="Doggett J."/>
            <person name="Fraser A."/>
            <person name="Hance Z."/>
            <person name="Hauser H."/>
            <person name="Jagels K."/>
            <person name="Moule S."/>
            <person name="Norbertczak H."/>
            <person name="Ormond D."/>
            <person name="Price C."/>
            <person name="Quail M.A."/>
            <person name="Sanders M."/>
            <person name="Walker D."/>
            <person name="Whitehead S."/>
            <person name="Salmond G.P.C."/>
            <person name="Birch P.R.J."/>
            <person name="Parkhill J."/>
            <person name="Toth I.K."/>
        </authorList>
    </citation>
    <scope>NUCLEOTIDE SEQUENCE [LARGE SCALE GENOMIC DNA]</scope>
    <source>
        <strain>SCRI 1043 / ATCC BAA-672</strain>
    </source>
</reference>
<reference key="2">
    <citation type="journal article" date="2014" name="Biochemistry">
        <title>Discovery of function in the enolase superfamily: D-mannonate and D-gluconate dehydratases in the D-mannonate dehydratase subgroup.</title>
        <authorList>
            <person name="Wichelecki D.J."/>
            <person name="Balthazor B.M."/>
            <person name="Chau A.C."/>
            <person name="Vetting M.W."/>
            <person name="Fedorov A.A."/>
            <person name="Fedorov E.V."/>
            <person name="Lukk T."/>
            <person name="Patskovsky Y.V."/>
            <person name="Stead M.B."/>
            <person name="Hillerich B.S."/>
            <person name="Seidel R.D."/>
            <person name="Almo S.C."/>
            <person name="Gerlt J.A."/>
        </authorList>
    </citation>
    <scope>FUNCTION</scope>
    <scope>LACK OF D-MANNONATE DEHYDRATASE ACTIVITY</scope>
    <source>
        <strain>SCRI 1043 / ATCC BAA-672</strain>
    </source>
</reference>
<protein>
    <recommendedName>
        <fullName>D-galactonate dehydratase family member ECA0189</fullName>
    </recommendedName>
</protein>
<gene>
    <name type="ordered locus">ECA0189</name>
</gene>